<evidence type="ECO:0000255" key="1">
    <source>
        <dbReference type="HAMAP-Rule" id="MF_00728"/>
    </source>
</evidence>
<accession>Q8P1M3</accession>
<gene>
    <name evidence="1" type="primary">ezrA</name>
    <name type="ordered locus">spyM18_0796</name>
</gene>
<proteinExistence type="inferred from homology"/>
<protein>
    <recommendedName>
        <fullName evidence="1">Septation ring formation regulator EzrA</fullName>
    </recommendedName>
</protein>
<reference key="1">
    <citation type="journal article" date="2002" name="Proc. Natl. Acad. Sci. U.S.A.">
        <title>Genome sequence and comparative microarray analysis of serotype M18 group A Streptococcus strains associated with acute rheumatic fever outbreaks.</title>
        <authorList>
            <person name="Smoot J.C."/>
            <person name="Barbian K.D."/>
            <person name="Van Gompel J.J."/>
            <person name="Smoot L.M."/>
            <person name="Chaussee M.S."/>
            <person name="Sylva G.L."/>
            <person name="Sturdevant D.E."/>
            <person name="Ricklefs S.M."/>
            <person name="Porcella S.F."/>
            <person name="Parkins L.D."/>
            <person name="Beres S.B."/>
            <person name="Campbell D.S."/>
            <person name="Smith T.M."/>
            <person name="Zhang Q."/>
            <person name="Kapur V."/>
            <person name="Daly J.A."/>
            <person name="Veasy L.G."/>
            <person name="Musser J.M."/>
        </authorList>
    </citation>
    <scope>NUCLEOTIDE SEQUENCE [LARGE SCALE GENOMIC DNA]</scope>
    <source>
        <strain>MGAS8232</strain>
    </source>
</reference>
<organism>
    <name type="scientific">Streptococcus pyogenes serotype M18 (strain MGAS8232)</name>
    <dbReference type="NCBI Taxonomy" id="186103"/>
    <lineage>
        <taxon>Bacteria</taxon>
        <taxon>Bacillati</taxon>
        <taxon>Bacillota</taxon>
        <taxon>Bacilli</taxon>
        <taxon>Lactobacillales</taxon>
        <taxon>Streptococcaceae</taxon>
        <taxon>Streptococcus</taxon>
    </lineage>
</organism>
<comment type="function">
    <text evidence="1">Negative regulator of FtsZ ring formation; modulates the frequency and position of FtsZ ring formation. Inhibits FtsZ ring formation at polar sites. Interacts either with FtsZ or with one of its binding partners to promote depolymerization.</text>
</comment>
<comment type="subcellular location">
    <subcellularLocation>
        <location>Cell membrane</location>
        <topology>Single-pass membrane protein</topology>
    </subcellularLocation>
    <text evidence="1">Colocalized with FtsZ to the nascent septal site.</text>
</comment>
<comment type="similarity">
    <text evidence="1">Belongs to the EzrA family.</text>
</comment>
<sequence length="574" mass="66061">MSSGIILLIVAIVLLVIIAYLVGVIIRKRNDSLITSLEERKQALFALPVNDEIEEVKSLHLIGQSQTSFREWNQKWVDLTVNSFADIENHIFEAENLNDTFNFIRAKHEINSVESQLNLVEEDIASIREALNILKEQEEKNSARVTHALDLYEKLQASISENEDNFGSTMPEIDKQMKNIETEFSQFVALNSSGDPVEASEVLDRAEEHTIALGQITEQIPAIVAKLEDDFPDQLDDLETGYRRLLEENYHFPEKNIEARFQEIRESIRANSSELVTLDLDRAREENTHIQERIDSLYEVFEREIAAYKVAAKNSKMLPRYLAHVKRNNEQLKNEIARLSRKYILSETESLTVKAFEKDIKEIEDSTLAVAEQFGLQEKPFSELQVTFERSIKTLTNVESGQMDVFAAVKDIEKIESQARHNLDVYVTQLHMIKRYMEKRHLPGIPQDFLSAFFTTSSQLEALMDELSRGRINIEAVSRLSEVATVAIANLEDLTYQVVQNATLTEQLLQYSNRYRSFEAGVQSSFEHALRLFEVENDYQASFDEISYALETVEPGVTDRFVNSYEKTREHIRF</sequence>
<feature type="chain" id="PRO_0000172894" description="Septation ring formation regulator EzrA">
    <location>
        <begin position="1"/>
        <end position="574"/>
    </location>
</feature>
<feature type="topological domain" description="Extracellular" evidence="1">
    <location>
        <begin position="1"/>
        <end position="7"/>
    </location>
</feature>
<feature type="transmembrane region" description="Helical" evidence="1">
    <location>
        <begin position="8"/>
        <end position="26"/>
    </location>
</feature>
<feature type="topological domain" description="Cytoplasmic" evidence="1">
    <location>
        <begin position="27"/>
        <end position="574"/>
    </location>
</feature>
<feature type="coiled-coil region" evidence="1">
    <location>
        <begin position="102"/>
        <end position="141"/>
    </location>
</feature>
<feature type="coiled-coil region" evidence="1">
    <location>
        <begin position="274"/>
        <end position="350"/>
    </location>
</feature>
<feature type="coiled-coil region" evidence="1">
    <location>
        <begin position="459"/>
        <end position="520"/>
    </location>
</feature>
<dbReference type="EMBL" id="AE009949">
    <property type="protein sequence ID" value="AAL97460.1"/>
    <property type="molecule type" value="Genomic_DNA"/>
</dbReference>
<dbReference type="RefSeq" id="WP_011017601.1">
    <property type="nucleotide sequence ID" value="NC_003485.1"/>
</dbReference>
<dbReference type="SMR" id="Q8P1M3"/>
<dbReference type="KEGG" id="spm:spyM18_0796"/>
<dbReference type="HOGENOM" id="CLU_034079_2_0_9"/>
<dbReference type="GO" id="GO:0005886">
    <property type="term" value="C:plasma membrane"/>
    <property type="evidence" value="ECO:0007669"/>
    <property type="project" value="UniProtKB-SubCell"/>
</dbReference>
<dbReference type="GO" id="GO:0005940">
    <property type="term" value="C:septin ring"/>
    <property type="evidence" value="ECO:0007669"/>
    <property type="project" value="InterPro"/>
</dbReference>
<dbReference type="GO" id="GO:0000917">
    <property type="term" value="P:division septum assembly"/>
    <property type="evidence" value="ECO:0007669"/>
    <property type="project" value="UniProtKB-KW"/>
</dbReference>
<dbReference type="GO" id="GO:0000921">
    <property type="term" value="P:septin ring assembly"/>
    <property type="evidence" value="ECO:0007669"/>
    <property type="project" value="InterPro"/>
</dbReference>
<dbReference type="HAMAP" id="MF_00728">
    <property type="entry name" value="EzrA"/>
    <property type="match status" value="1"/>
</dbReference>
<dbReference type="InterPro" id="IPR010379">
    <property type="entry name" value="EzrA"/>
</dbReference>
<dbReference type="NCBIfam" id="NF003407">
    <property type="entry name" value="PRK04778.1-1"/>
    <property type="match status" value="1"/>
</dbReference>
<dbReference type="NCBIfam" id="NF003410">
    <property type="entry name" value="PRK04778.1-4"/>
    <property type="match status" value="1"/>
</dbReference>
<dbReference type="Pfam" id="PF06160">
    <property type="entry name" value="EzrA"/>
    <property type="match status" value="1"/>
</dbReference>
<name>EZRA_STRP8</name>
<keyword id="KW-0131">Cell cycle</keyword>
<keyword id="KW-0132">Cell division</keyword>
<keyword id="KW-1003">Cell membrane</keyword>
<keyword id="KW-0175">Coiled coil</keyword>
<keyword id="KW-0472">Membrane</keyword>
<keyword id="KW-0717">Septation</keyword>
<keyword id="KW-0812">Transmembrane</keyword>
<keyword id="KW-1133">Transmembrane helix</keyword>